<feature type="chain" id="PRO_0000400148" description="D-inositol 3-phosphate glycosyltransferase">
    <location>
        <begin position="1"/>
        <end position="451"/>
    </location>
</feature>
<feature type="binding site" evidence="1">
    <location>
        <position position="21"/>
    </location>
    <ligand>
        <name>1D-myo-inositol 3-phosphate</name>
        <dbReference type="ChEBI" id="CHEBI:58401"/>
    </ligand>
</feature>
<feature type="binding site" evidence="1">
    <location>
        <begin position="27"/>
        <end position="28"/>
    </location>
    <ligand>
        <name>UDP-N-acetyl-alpha-D-glucosamine</name>
        <dbReference type="ChEBI" id="CHEBI:57705"/>
    </ligand>
</feature>
<feature type="binding site" evidence="1">
    <location>
        <begin position="32"/>
        <end position="37"/>
    </location>
    <ligand>
        <name>1D-myo-inositol 3-phosphate</name>
        <dbReference type="ChEBI" id="CHEBI:58401"/>
    </ligand>
</feature>
<feature type="binding site" evidence="1">
    <location>
        <position position="35"/>
    </location>
    <ligand>
        <name>UDP-N-acetyl-alpha-D-glucosamine</name>
        <dbReference type="ChEBI" id="CHEBI:57705"/>
    </ligand>
</feature>
<feature type="binding site" evidence="1">
    <location>
        <position position="90"/>
    </location>
    <ligand>
        <name>1D-myo-inositol 3-phosphate</name>
        <dbReference type="ChEBI" id="CHEBI:58401"/>
    </ligand>
</feature>
<feature type="binding site" evidence="1">
    <location>
        <position position="123"/>
    </location>
    <ligand>
        <name>1D-myo-inositol 3-phosphate</name>
        <dbReference type="ChEBI" id="CHEBI:58401"/>
    </ligand>
</feature>
<feature type="binding site" evidence="1">
    <location>
        <position position="147"/>
    </location>
    <ligand>
        <name>1D-myo-inositol 3-phosphate</name>
        <dbReference type="ChEBI" id="CHEBI:58401"/>
    </ligand>
</feature>
<feature type="binding site" evidence="1">
    <location>
        <position position="167"/>
    </location>
    <ligand>
        <name>1D-myo-inositol 3-phosphate</name>
        <dbReference type="ChEBI" id="CHEBI:58401"/>
    </ligand>
</feature>
<feature type="binding site" evidence="1">
    <location>
        <position position="241"/>
    </location>
    <ligand>
        <name>UDP-N-acetyl-alpha-D-glucosamine</name>
        <dbReference type="ChEBI" id="CHEBI:57705"/>
    </ligand>
</feature>
<feature type="binding site" evidence="1">
    <location>
        <position position="246"/>
    </location>
    <ligand>
        <name>UDP-N-acetyl-alpha-D-glucosamine</name>
        <dbReference type="ChEBI" id="CHEBI:57705"/>
    </ligand>
</feature>
<feature type="binding site" evidence="1">
    <location>
        <position position="305"/>
    </location>
    <ligand>
        <name>UDP-N-acetyl-alpha-D-glucosamine</name>
        <dbReference type="ChEBI" id="CHEBI:57705"/>
    </ligand>
</feature>
<feature type="binding site" evidence="1">
    <location>
        <position position="314"/>
    </location>
    <ligand>
        <name>Mg(2+)</name>
        <dbReference type="ChEBI" id="CHEBI:18420"/>
    </ligand>
</feature>
<feature type="binding site" evidence="1">
    <location>
        <position position="315"/>
    </location>
    <ligand>
        <name>Mg(2+)</name>
        <dbReference type="ChEBI" id="CHEBI:18420"/>
    </ligand>
</feature>
<feature type="binding site" evidence="1">
    <location>
        <position position="317"/>
    </location>
    <ligand>
        <name>Mg(2+)</name>
        <dbReference type="ChEBI" id="CHEBI:18420"/>
    </ligand>
</feature>
<feature type="binding site" evidence="1">
    <location>
        <position position="327"/>
    </location>
    <ligand>
        <name>UDP-N-acetyl-alpha-D-glucosamine</name>
        <dbReference type="ChEBI" id="CHEBI:57705"/>
    </ligand>
</feature>
<feature type="binding site" evidence="1">
    <location>
        <position position="335"/>
    </location>
    <ligand>
        <name>UDP-N-acetyl-alpha-D-glucosamine</name>
        <dbReference type="ChEBI" id="CHEBI:57705"/>
    </ligand>
</feature>
<feature type="binding site" evidence="1">
    <location>
        <position position="341"/>
    </location>
    <ligand>
        <name>Mg(2+)</name>
        <dbReference type="ChEBI" id="CHEBI:18420"/>
    </ligand>
</feature>
<comment type="function">
    <text evidence="1">Catalyzes the transfer of a N-acetyl-glucosamine moiety to 1D-myo-inositol 3-phosphate to produce 1D-myo-inositol 2-acetamido-2-deoxy-glucopyranoside 3-phosphate in the mycothiol biosynthesis pathway.</text>
</comment>
<comment type="catalytic activity">
    <reaction evidence="1">
        <text>1D-myo-inositol 3-phosphate + UDP-N-acetyl-alpha-D-glucosamine = 1D-myo-inositol 2-acetamido-2-deoxy-alpha-D-glucopyranoside 3-phosphate + UDP + H(+)</text>
        <dbReference type="Rhea" id="RHEA:26188"/>
        <dbReference type="ChEBI" id="CHEBI:15378"/>
        <dbReference type="ChEBI" id="CHEBI:57705"/>
        <dbReference type="ChEBI" id="CHEBI:58223"/>
        <dbReference type="ChEBI" id="CHEBI:58401"/>
        <dbReference type="ChEBI" id="CHEBI:58892"/>
        <dbReference type="EC" id="2.4.1.250"/>
    </reaction>
</comment>
<comment type="subunit">
    <text evidence="1">Homodimer.</text>
</comment>
<comment type="similarity">
    <text evidence="1">Belongs to the glycosyltransferase group 1 family. MshA subfamily.</text>
</comment>
<reference key="1">
    <citation type="journal article" date="2004" name="Proc. Natl. Acad. Sci. U.S.A.">
        <title>The complete genomic sequence of Nocardia farcinica IFM 10152.</title>
        <authorList>
            <person name="Ishikawa J."/>
            <person name="Yamashita A."/>
            <person name="Mikami Y."/>
            <person name="Hoshino Y."/>
            <person name="Kurita H."/>
            <person name="Hotta K."/>
            <person name="Shiba T."/>
            <person name="Hattori M."/>
        </authorList>
    </citation>
    <scope>NUCLEOTIDE SEQUENCE [LARGE SCALE GENOMIC DNA]</scope>
    <source>
        <strain>IFM 10152</strain>
    </source>
</reference>
<accession>Q5YP47</accession>
<keyword id="KW-0328">Glycosyltransferase</keyword>
<keyword id="KW-0460">Magnesium</keyword>
<keyword id="KW-0479">Metal-binding</keyword>
<keyword id="KW-1185">Reference proteome</keyword>
<keyword id="KW-0808">Transferase</keyword>
<organism>
    <name type="scientific">Nocardia farcinica (strain IFM 10152)</name>
    <dbReference type="NCBI Taxonomy" id="247156"/>
    <lineage>
        <taxon>Bacteria</taxon>
        <taxon>Bacillati</taxon>
        <taxon>Actinomycetota</taxon>
        <taxon>Actinomycetes</taxon>
        <taxon>Mycobacteriales</taxon>
        <taxon>Nocardiaceae</taxon>
        <taxon>Nocardia</taxon>
    </lineage>
</organism>
<protein>
    <recommendedName>
        <fullName>D-inositol 3-phosphate glycosyltransferase</fullName>
        <ecNumber evidence="1">2.4.1.250</ecNumber>
    </recommendedName>
    <alternativeName>
        <fullName evidence="1">N-acetylglucosamine-inositol-phosphate N-acetylglucosaminyltransferase</fullName>
        <shortName evidence="1">GlcNAc-Ins-P N-acetylglucosaminyltransferase</shortName>
    </alternativeName>
</protein>
<gene>
    <name evidence="1" type="primary">mshA</name>
    <name type="ordered locus">NFA_51920</name>
</gene>
<evidence type="ECO:0000255" key="1">
    <source>
        <dbReference type="HAMAP-Rule" id="MF_01695"/>
    </source>
</evidence>
<dbReference type="EC" id="2.4.1.250" evidence="1"/>
<dbReference type="EMBL" id="AP006618">
    <property type="protein sequence ID" value="BAD60044.1"/>
    <property type="molecule type" value="Genomic_DNA"/>
</dbReference>
<dbReference type="RefSeq" id="WP_011211726.1">
    <property type="nucleotide sequence ID" value="NC_006361.1"/>
</dbReference>
<dbReference type="SMR" id="Q5YP47"/>
<dbReference type="STRING" id="247156.NFA_51920"/>
<dbReference type="CAZy" id="GT4">
    <property type="family name" value="Glycosyltransferase Family 4"/>
</dbReference>
<dbReference type="GeneID" id="61135768"/>
<dbReference type="KEGG" id="nfa:NFA_51920"/>
<dbReference type="eggNOG" id="COG0438">
    <property type="taxonomic scope" value="Bacteria"/>
</dbReference>
<dbReference type="HOGENOM" id="CLU_009583_2_3_11"/>
<dbReference type="OrthoDB" id="9810929at2"/>
<dbReference type="Proteomes" id="UP000006820">
    <property type="component" value="Chromosome"/>
</dbReference>
<dbReference type="GO" id="GO:0008375">
    <property type="term" value="F:acetylglucosaminyltransferase activity"/>
    <property type="evidence" value="ECO:0007669"/>
    <property type="project" value="UniProtKB-UniRule"/>
</dbReference>
<dbReference type="GO" id="GO:0102710">
    <property type="term" value="F:D-inositol-3-phosphate glycosyltransferase activity"/>
    <property type="evidence" value="ECO:0007669"/>
    <property type="project" value="UniProtKB-EC"/>
</dbReference>
<dbReference type="GO" id="GO:0000287">
    <property type="term" value="F:magnesium ion binding"/>
    <property type="evidence" value="ECO:0007669"/>
    <property type="project" value="UniProtKB-UniRule"/>
</dbReference>
<dbReference type="GO" id="GO:0010125">
    <property type="term" value="P:mycothiol biosynthetic process"/>
    <property type="evidence" value="ECO:0007669"/>
    <property type="project" value="UniProtKB-UniRule"/>
</dbReference>
<dbReference type="CDD" id="cd03800">
    <property type="entry name" value="GT4_sucrose_synthase"/>
    <property type="match status" value="1"/>
</dbReference>
<dbReference type="Gene3D" id="3.40.50.2000">
    <property type="entry name" value="Glycogen Phosphorylase B"/>
    <property type="match status" value="2"/>
</dbReference>
<dbReference type="HAMAP" id="MF_01695">
    <property type="entry name" value="MshA"/>
    <property type="match status" value="1"/>
</dbReference>
<dbReference type="InterPro" id="IPR001296">
    <property type="entry name" value="Glyco_trans_1"/>
</dbReference>
<dbReference type="InterPro" id="IPR028098">
    <property type="entry name" value="Glyco_trans_4-like_N"/>
</dbReference>
<dbReference type="InterPro" id="IPR017814">
    <property type="entry name" value="Mycothiol_biosynthesis_MshA"/>
</dbReference>
<dbReference type="NCBIfam" id="TIGR03449">
    <property type="entry name" value="mycothiol_MshA"/>
    <property type="match status" value="1"/>
</dbReference>
<dbReference type="PANTHER" id="PTHR12526:SF510">
    <property type="entry name" value="D-INOSITOL 3-PHOSPHATE GLYCOSYLTRANSFERASE"/>
    <property type="match status" value="1"/>
</dbReference>
<dbReference type="PANTHER" id="PTHR12526">
    <property type="entry name" value="GLYCOSYLTRANSFERASE"/>
    <property type="match status" value="1"/>
</dbReference>
<dbReference type="Pfam" id="PF13579">
    <property type="entry name" value="Glyco_trans_4_4"/>
    <property type="match status" value="1"/>
</dbReference>
<dbReference type="Pfam" id="PF00534">
    <property type="entry name" value="Glycos_transf_1"/>
    <property type="match status" value="1"/>
</dbReference>
<dbReference type="SUPFAM" id="SSF53756">
    <property type="entry name" value="UDP-Glycosyltransferase/glycogen phosphorylase"/>
    <property type="match status" value="1"/>
</dbReference>
<name>MSHA_NOCFA</name>
<sequence>MDGVSQRVDQRPNRIAVLSVHTSPLAQPGTGDAGGMNVYVLRTAVELAQRGIEVEIFTRATASHIPPVQEAAPGVLVRNVVAGPFEGLDKQDLPTQLCPFTAEVLRQEARQLPGYYDLVHSHYWLSGQVGWLTRDRWRVPLVHTAHTLAAVKNAALAEGDAPEPVSREIGEKQIIAEADRMVANTAEEARQLVELYGADRDRIDVVPPGADLTRYRPGDRAAARAELGLAPGEPIVAFVGRIQPLKAPDVLVRAAAELLRRDPGRALRVLIVGGPSGSGLQRPDALIELAAELGISERVTFLPPQPPERLVQVYRAADLVAVPSYSESFGLVAIEAQASGTPVLAADVGGLSTAVRDGATGLLVRGHETADWADALGALLGDRDRLRRMGLRAVAHAAGFSWAHTAEGLLESYSAALWEFHGARAGVGAGRMTPNQARSRALWRRRMGVRR</sequence>
<proteinExistence type="inferred from homology"/>